<dbReference type="EC" id="2.7.11.1"/>
<dbReference type="EMBL" id="AY180177">
    <property type="protein sequence ID" value="AAO13515.1"/>
    <property type="molecule type" value="Genomic_DNA"/>
</dbReference>
<dbReference type="EMBL" id="Y10725">
    <property type="protein sequence ID" value="CAA71714.2"/>
    <property type="molecule type" value="mRNA"/>
</dbReference>
<dbReference type="EMBL" id="BC058732">
    <property type="protein sequence ID" value="AAH58732.1"/>
    <property type="molecule type" value="mRNA"/>
</dbReference>
<dbReference type="EMBL" id="AK013347">
    <property type="protein sequence ID" value="BAB28802.1"/>
    <property type="molecule type" value="mRNA"/>
</dbReference>
<dbReference type="EMBL" id="X82320">
    <property type="protein sequence ID" value="CAA57763.1"/>
    <property type="molecule type" value="mRNA"/>
</dbReference>
<dbReference type="CCDS" id="CCDS15468.1"/>
<dbReference type="PIR" id="I48615">
    <property type="entry name" value="I48615"/>
</dbReference>
<dbReference type="RefSeq" id="NP_034763.3">
    <property type="nucleotide sequence ID" value="NM_010633.3"/>
</dbReference>
<dbReference type="SMR" id="P97343"/>
<dbReference type="BioGRID" id="200956">
    <property type="interactions" value="10"/>
</dbReference>
<dbReference type="FunCoup" id="P97343">
    <property type="interactions" value="2078"/>
</dbReference>
<dbReference type="IntAct" id="P97343">
    <property type="interactions" value="1"/>
</dbReference>
<dbReference type="STRING" id="10090.ENSMUSP00000027979"/>
<dbReference type="iPTMnet" id="P97343"/>
<dbReference type="PhosphoSitePlus" id="P97343"/>
<dbReference type="PaxDb" id="10090-ENSMUSP00000027979"/>
<dbReference type="ProteomicsDB" id="298472"/>
<dbReference type="Antibodypedia" id="34322">
    <property type="antibodies" value="337 antibodies from 29 providers"/>
</dbReference>
<dbReference type="DNASU" id="16589"/>
<dbReference type="Ensembl" id="ENSMUST00000027979.14">
    <property type="protein sequence ID" value="ENSMUSP00000027979.8"/>
    <property type="gene ID" value="ENSMUSG00000026667.15"/>
</dbReference>
<dbReference type="GeneID" id="16589"/>
<dbReference type="KEGG" id="mmu:16589"/>
<dbReference type="UCSC" id="uc007dma.1">
    <property type="organism name" value="mouse"/>
</dbReference>
<dbReference type="AGR" id="MGI:1341908"/>
<dbReference type="CTD" id="127933"/>
<dbReference type="MGI" id="MGI:1341908">
    <property type="gene designation" value="Uhmk1"/>
</dbReference>
<dbReference type="VEuPathDB" id="HostDB:ENSMUSG00000026667"/>
<dbReference type="eggNOG" id="KOG0032">
    <property type="taxonomic scope" value="Eukaryota"/>
</dbReference>
<dbReference type="GeneTree" id="ENSGT00940000157769"/>
<dbReference type="InParanoid" id="P97343"/>
<dbReference type="OMA" id="VMATFYP"/>
<dbReference type="OrthoDB" id="10266058at2759"/>
<dbReference type="PhylomeDB" id="P97343"/>
<dbReference type="TreeFam" id="TF331856"/>
<dbReference type="BRENDA" id="2.7.11.1">
    <property type="organism ID" value="3474"/>
</dbReference>
<dbReference type="Reactome" id="R-MMU-9634638">
    <property type="pathway name" value="Estrogen-dependent nuclear events downstream of ESR-membrane signaling"/>
</dbReference>
<dbReference type="BioGRID-ORCS" id="16589">
    <property type="hits" value="0 hits in 82 CRISPR screens"/>
</dbReference>
<dbReference type="PRO" id="PR:P97343"/>
<dbReference type="Proteomes" id="UP000000589">
    <property type="component" value="Chromosome 1"/>
</dbReference>
<dbReference type="RNAct" id="P97343">
    <property type="molecule type" value="protein"/>
</dbReference>
<dbReference type="Bgee" id="ENSMUSG00000026667">
    <property type="expression patterns" value="Expressed in medial vestibular nucleus and 249 other cell types or tissues"/>
</dbReference>
<dbReference type="ExpressionAtlas" id="P97343">
    <property type="expression patterns" value="baseline and differential"/>
</dbReference>
<dbReference type="GO" id="GO:0030424">
    <property type="term" value="C:axon"/>
    <property type="evidence" value="ECO:0000314"/>
    <property type="project" value="BHF-UCL"/>
</dbReference>
<dbReference type="GO" id="GO:0005737">
    <property type="term" value="C:cytoplasm"/>
    <property type="evidence" value="ECO:0000250"/>
    <property type="project" value="UniProtKB"/>
</dbReference>
<dbReference type="GO" id="GO:0032839">
    <property type="term" value="C:dendrite cytoplasm"/>
    <property type="evidence" value="ECO:0000314"/>
    <property type="project" value="BHF-UCL"/>
</dbReference>
<dbReference type="GO" id="GO:0071598">
    <property type="term" value="C:neuronal ribonucleoprotein granule"/>
    <property type="evidence" value="ECO:0000314"/>
    <property type="project" value="BHF-UCL"/>
</dbReference>
<dbReference type="GO" id="GO:0005654">
    <property type="term" value="C:nucleoplasm"/>
    <property type="evidence" value="ECO:0007669"/>
    <property type="project" value="Ensembl"/>
</dbReference>
<dbReference type="GO" id="GO:0005634">
    <property type="term" value="C:nucleus"/>
    <property type="evidence" value="ECO:0000250"/>
    <property type="project" value="UniProtKB"/>
</dbReference>
<dbReference type="GO" id="GO:0005524">
    <property type="term" value="F:ATP binding"/>
    <property type="evidence" value="ECO:0007669"/>
    <property type="project" value="UniProtKB-KW"/>
</dbReference>
<dbReference type="GO" id="GO:0004672">
    <property type="term" value="F:protein kinase activity"/>
    <property type="evidence" value="ECO:0000304"/>
    <property type="project" value="BHF-UCL"/>
</dbReference>
<dbReference type="GO" id="GO:0106310">
    <property type="term" value="F:protein serine kinase activity"/>
    <property type="evidence" value="ECO:0007669"/>
    <property type="project" value="RHEA"/>
</dbReference>
<dbReference type="GO" id="GO:0004674">
    <property type="term" value="F:protein serine/threonine kinase activity"/>
    <property type="evidence" value="ECO:0000250"/>
    <property type="project" value="UniProtKB"/>
</dbReference>
<dbReference type="GO" id="GO:0043021">
    <property type="term" value="F:ribonucleoprotein complex binding"/>
    <property type="evidence" value="ECO:0000314"/>
    <property type="project" value="BHF-UCL"/>
</dbReference>
<dbReference type="GO" id="GO:0003723">
    <property type="term" value="F:RNA binding"/>
    <property type="evidence" value="ECO:0007669"/>
    <property type="project" value="UniProtKB-KW"/>
</dbReference>
<dbReference type="GO" id="GO:0031175">
    <property type="term" value="P:neuron projection development"/>
    <property type="evidence" value="ECO:0000315"/>
    <property type="project" value="BHF-UCL"/>
</dbReference>
<dbReference type="GO" id="GO:0018105">
    <property type="term" value="P:peptidyl-serine phosphorylation"/>
    <property type="evidence" value="ECO:0000250"/>
    <property type="project" value="UniProtKB"/>
</dbReference>
<dbReference type="GO" id="GO:0045948">
    <property type="term" value="P:positive regulation of translational initiation"/>
    <property type="evidence" value="ECO:0000315"/>
    <property type="project" value="BHF-UCL"/>
</dbReference>
<dbReference type="GO" id="GO:0051726">
    <property type="term" value="P:regulation of cell cycle"/>
    <property type="evidence" value="ECO:0000250"/>
    <property type="project" value="HGNC-UCL"/>
</dbReference>
<dbReference type="GO" id="GO:0046825">
    <property type="term" value="P:regulation of protein export from nucleus"/>
    <property type="evidence" value="ECO:0000250"/>
    <property type="project" value="HGNC-UCL"/>
</dbReference>
<dbReference type="CDD" id="cd12465">
    <property type="entry name" value="RRM_UHMK1"/>
    <property type="match status" value="1"/>
</dbReference>
<dbReference type="CDD" id="cd14020">
    <property type="entry name" value="STKc_KIS"/>
    <property type="match status" value="1"/>
</dbReference>
<dbReference type="FunFam" id="1.10.510.10:FF:000322">
    <property type="entry name" value="Serine/threonine-protein kinase Kist isoform 1"/>
    <property type="match status" value="1"/>
</dbReference>
<dbReference type="FunFam" id="3.30.200.20:FF:000324">
    <property type="entry name" value="Serine/threonine-protein kinase Kist isoform 1"/>
    <property type="match status" value="1"/>
</dbReference>
<dbReference type="FunFam" id="3.30.70.330:FF:000241">
    <property type="entry name" value="Serine/threonine-protein kinase Kist isoform 1"/>
    <property type="match status" value="1"/>
</dbReference>
<dbReference type="Gene3D" id="3.30.70.330">
    <property type="match status" value="1"/>
</dbReference>
<dbReference type="Gene3D" id="3.30.200.20">
    <property type="entry name" value="Phosphorylase Kinase, domain 1"/>
    <property type="match status" value="1"/>
</dbReference>
<dbReference type="Gene3D" id="1.10.510.10">
    <property type="entry name" value="Transferase(Phosphotransferase) domain 1"/>
    <property type="match status" value="1"/>
</dbReference>
<dbReference type="InterPro" id="IPR011009">
    <property type="entry name" value="Kinase-like_dom_sf"/>
</dbReference>
<dbReference type="InterPro" id="IPR012677">
    <property type="entry name" value="Nucleotide-bd_a/b_plait_sf"/>
</dbReference>
<dbReference type="InterPro" id="IPR000719">
    <property type="entry name" value="Prot_kinase_dom"/>
</dbReference>
<dbReference type="InterPro" id="IPR035979">
    <property type="entry name" value="RBD_domain_sf"/>
</dbReference>
<dbReference type="InterPro" id="IPR000504">
    <property type="entry name" value="RRM_dom"/>
</dbReference>
<dbReference type="InterPro" id="IPR034372">
    <property type="entry name" value="UHMK1"/>
</dbReference>
<dbReference type="InterPro" id="IPR034371">
    <property type="entry name" value="UHMK1_RRM"/>
</dbReference>
<dbReference type="PANTHER" id="PTHR46962">
    <property type="entry name" value="SERINE/THREONINE-PROTEIN KINASE KIST"/>
    <property type="match status" value="1"/>
</dbReference>
<dbReference type="PANTHER" id="PTHR46962:SF1">
    <property type="entry name" value="SERINE_THREONINE-PROTEIN KINASE KIST"/>
    <property type="match status" value="1"/>
</dbReference>
<dbReference type="Pfam" id="PF00069">
    <property type="entry name" value="Pkinase"/>
    <property type="match status" value="1"/>
</dbReference>
<dbReference type="Pfam" id="PF00076">
    <property type="entry name" value="RRM_1"/>
    <property type="match status" value="1"/>
</dbReference>
<dbReference type="SMART" id="SM00360">
    <property type="entry name" value="RRM"/>
    <property type="match status" value="1"/>
</dbReference>
<dbReference type="SMART" id="SM00220">
    <property type="entry name" value="S_TKc"/>
    <property type="match status" value="1"/>
</dbReference>
<dbReference type="SUPFAM" id="SSF56112">
    <property type="entry name" value="Protein kinase-like (PK-like)"/>
    <property type="match status" value="1"/>
</dbReference>
<dbReference type="SUPFAM" id="SSF54928">
    <property type="entry name" value="RNA-binding domain, RBD"/>
    <property type="match status" value="1"/>
</dbReference>
<dbReference type="PROSITE" id="PS50011">
    <property type="entry name" value="PROTEIN_KINASE_DOM"/>
    <property type="match status" value="1"/>
</dbReference>
<dbReference type="PROSITE" id="PS50102">
    <property type="entry name" value="RRM"/>
    <property type="match status" value="1"/>
</dbReference>
<comment type="function">
    <text evidence="1">Upon serum stimulation, phosphorylates CDKN1B/p27Kip1, thus controlling CDKN1B subcellular location and cell cycle progression in G1 phase. May be involved in trafficking and/or processing of RNA (By similarity).</text>
</comment>
<comment type="catalytic activity">
    <reaction evidence="6">
        <text>L-seryl-[protein] + ATP = O-phospho-L-seryl-[protein] + ADP + H(+)</text>
        <dbReference type="Rhea" id="RHEA:17989"/>
        <dbReference type="Rhea" id="RHEA-COMP:9863"/>
        <dbReference type="Rhea" id="RHEA-COMP:11604"/>
        <dbReference type="ChEBI" id="CHEBI:15378"/>
        <dbReference type="ChEBI" id="CHEBI:29999"/>
        <dbReference type="ChEBI" id="CHEBI:30616"/>
        <dbReference type="ChEBI" id="CHEBI:83421"/>
        <dbReference type="ChEBI" id="CHEBI:456216"/>
        <dbReference type="EC" id="2.7.11.1"/>
    </reaction>
</comment>
<comment type="catalytic activity">
    <reaction evidence="6">
        <text>L-threonyl-[protein] + ATP = O-phospho-L-threonyl-[protein] + ADP + H(+)</text>
        <dbReference type="Rhea" id="RHEA:46608"/>
        <dbReference type="Rhea" id="RHEA-COMP:11060"/>
        <dbReference type="Rhea" id="RHEA-COMP:11605"/>
        <dbReference type="ChEBI" id="CHEBI:15378"/>
        <dbReference type="ChEBI" id="CHEBI:30013"/>
        <dbReference type="ChEBI" id="CHEBI:30616"/>
        <dbReference type="ChEBI" id="CHEBI:61977"/>
        <dbReference type="ChEBI" id="CHEBI:456216"/>
        <dbReference type="EC" id="2.7.11.1"/>
    </reaction>
</comment>
<comment type="subunit">
    <text evidence="1 4 5">Interacts with PAM and CDKN1B/p27Kip1 (By similarity). Interacts with stathmin.</text>
</comment>
<comment type="subcellular location">
    <subcellularLocation>
        <location evidence="4">Nucleus</location>
    </subcellularLocation>
    <text>Mostly nuclear.</text>
</comment>
<comment type="induction">
    <text>By serum growth factors.</text>
</comment>
<comment type="similarity">
    <text evidence="2">Belongs to the protein kinase superfamily. Ser/Thr protein kinase family.</text>
</comment>
<organism evidence="7">
    <name type="scientific">Mus musculus</name>
    <name type="common">Mouse</name>
    <dbReference type="NCBI Taxonomy" id="10090"/>
    <lineage>
        <taxon>Eukaryota</taxon>
        <taxon>Metazoa</taxon>
        <taxon>Chordata</taxon>
        <taxon>Craniata</taxon>
        <taxon>Vertebrata</taxon>
        <taxon>Euteleostomi</taxon>
        <taxon>Mammalia</taxon>
        <taxon>Eutheria</taxon>
        <taxon>Euarchontoglires</taxon>
        <taxon>Glires</taxon>
        <taxon>Rodentia</taxon>
        <taxon>Myomorpha</taxon>
        <taxon>Muroidea</taxon>
        <taxon>Muridae</taxon>
        <taxon>Murinae</taxon>
        <taxon>Mus</taxon>
        <taxon>Mus</taxon>
    </lineage>
</organism>
<accession>P97343</accession>
<accession>Q61775</accession>
<accession>Q9CYT1</accession>
<evidence type="ECO:0000250" key="1"/>
<evidence type="ECO:0000255" key="2">
    <source>
        <dbReference type="PROSITE-ProRule" id="PRU00159"/>
    </source>
</evidence>
<evidence type="ECO:0000255" key="3">
    <source>
        <dbReference type="PROSITE-ProRule" id="PRU00176"/>
    </source>
</evidence>
<evidence type="ECO:0000269" key="4">
    <source>
    </source>
</evidence>
<evidence type="ECO:0000269" key="5">
    <source>
    </source>
</evidence>
<evidence type="ECO:0000305" key="6"/>
<evidence type="ECO:0000312" key="7">
    <source>
        <dbReference type="EMBL" id="CAA71714.2"/>
    </source>
</evidence>
<sequence>MAGSGCAWGAEPPRFLEAFGRLWQVQSRLGSGSSASVYRVRCCGTPGSPPGALKQFLPPGTTGAAASAAEYGFRKERAALEQLQGHRNIVTLYGVFTIHFSPNVPSRCLLLELLDVSVSELLLYSSHQGCSMWMIQHCARDVLEALAFLHHEGYVHADLKPRNILWSAENECFKLIDFGLSFKEGNQDVKYIQTDGYRAPEAELQNCLAQAGLQSDTECTSAVDLWSLGIILLEMFSGMKLKHTVRSQEWKANSSAIIDHIFASKAVVNAAIPAYHLRDLIKSMLHDDPGRRIPAEMALCSPFFSIPFAPHIEDLVMLPTPVLRLLNVLDDDYLENEDEYEDVVEDVKEECQKYGPVVSLLVPKENPGRGQVFVEYANAGDSKAAQKLLTGRMFDGKFVVATFYPLSAYKRGYLYQTLL</sequence>
<proteinExistence type="evidence at protein level"/>
<keyword id="KW-0067">ATP-binding</keyword>
<keyword id="KW-0418">Kinase</keyword>
<keyword id="KW-0547">Nucleotide-binding</keyword>
<keyword id="KW-0539">Nucleus</keyword>
<keyword id="KW-1185">Reference proteome</keyword>
<keyword id="KW-0694">RNA-binding</keyword>
<keyword id="KW-0723">Serine/threonine-protein kinase</keyword>
<keyword id="KW-0808">Transferase</keyword>
<name>UHMK1_MOUSE</name>
<gene>
    <name type="primary">Uhmk1</name>
    <name type="synonym">Kis</name>
    <name type="synonym">Kist</name>
</gene>
<protein>
    <recommendedName>
        <fullName>Serine/threonine-protein kinase Kist</fullName>
        <ecNumber>2.7.11.1</ecNumber>
    </recommendedName>
    <alternativeName>
        <fullName>Kinase interacting with stathmin</fullName>
    </alternativeName>
    <alternativeName>
        <fullName>PAM COOH-terminal interactor protein 2</fullName>
        <shortName>P-CIP2</shortName>
    </alternativeName>
    <alternativeName>
        <fullName>U2AF homology motif kinase 1</fullName>
    </alternativeName>
</protein>
<reference evidence="6" key="1">
    <citation type="submission" date="2002-10" db="EMBL/GenBank/DDBJ databases">
        <authorList>
            <person name="Crook M.F."/>
            <person name="Boehm M."/>
            <person name="Nabel E.G."/>
        </authorList>
    </citation>
    <scope>NUCLEOTIDE SEQUENCE [GENOMIC DNA]</scope>
    <source>
        <strain>129</strain>
    </source>
</reference>
<reference key="2">
    <citation type="journal article" date="2005" name="Science">
        <title>The transcriptional landscape of the mammalian genome.</title>
        <authorList>
            <person name="Carninci P."/>
            <person name="Kasukawa T."/>
            <person name="Katayama S."/>
            <person name="Gough J."/>
            <person name="Frith M.C."/>
            <person name="Maeda N."/>
            <person name="Oyama R."/>
            <person name="Ravasi T."/>
            <person name="Lenhard B."/>
            <person name="Wells C."/>
            <person name="Kodzius R."/>
            <person name="Shimokawa K."/>
            <person name="Bajic V.B."/>
            <person name="Brenner S.E."/>
            <person name="Batalov S."/>
            <person name="Forrest A.R."/>
            <person name="Zavolan M."/>
            <person name="Davis M.J."/>
            <person name="Wilming L.G."/>
            <person name="Aidinis V."/>
            <person name="Allen J.E."/>
            <person name="Ambesi-Impiombato A."/>
            <person name="Apweiler R."/>
            <person name="Aturaliya R.N."/>
            <person name="Bailey T.L."/>
            <person name="Bansal M."/>
            <person name="Baxter L."/>
            <person name="Beisel K.W."/>
            <person name="Bersano T."/>
            <person name="Bono H."/>
            <person name="Chalk A.M."/>
            <person name="Chiu K.P."/>
            <person name="Choudhary V."/>
            <person name="Christoffels A."/>
            <person name="Clutterbuck D.R."/>
            <person name="Crowe M.L."/>
            <person name="Dalla E."/>
            <person name="Dalrymple B.P."/>
            <person name="de Bono B."/>
            <person name="Della Gatta G."/>
            <person name="di Bernardo D."/>
            <person name="Down T."/>
            <person name="Engstrom P."/>
            <person name="Fagiolini M."/>
            <person name="Faulkner G."/>
            <person name="Fletcher C.F."/>
            <person name="Fukushima T."/>
            <person name="Furuno M."/>
            <person name="Futaki S."/>
            <person name="Gariboldi M."/>
            <person name="Georgii-Hemming P."/>
            <person name="Gingeras T.R."/>
            <person name="Gojobori T."/>
            <person name="Green R.E."/>
            <person name="Gustincich S."/>
            <person name="Harbers M."/>
            <person name="Hayashi Y."/>
            <person name="Hensch T.K."/>
            <person name="Hirokawa N."/>
            <person name="Hill D."/>
            <person name="Huminiecki L."/>
            <person name="Iacono M."/>
            <person name="Ikeo K."/>
            <person name="Iwama A."/>
            <person name="Ishikawa T."/>
            <person name="Jakt M."/>
            <person name="Kanapin A."/>
            <person name="Katoh M."/>
            <person name="Kawasawa Y."/>
            <person name="Kelso J."/>
            <person name="Kitamura H."/>
            <person name="Kitano H."/>
            <person name="Kollias G."/>
            <person name="Krishnan S.P."/>
            <person name="Kruger A."/>
            <person name="Kummerfeld S.K."/>
            <person name="Kurochkin I.V."/>
            <person name="Lareau L.F."/>
            <person name="Lazarevic D."/>
            <person name="Lipovich L."/>
            <person name="Liu J."/>
            <person name="Liuni S."/>
            <person name="McWilliam S."/>
            <person name="Madan Babu M."/>
            <person name="Madera M."/>
            <person name="Marchionni L."/>
            <person name="Matsuda H."/>
            <person name="Matsuzawa S."/>
            <person name="Miki H."/>
            <person name="Mignone F."/>
            <person name="Miyake S."/>
            <person name="Morris K."/>
            <person name="Mottagui-Tabar S."/>
            <person name="Mulder N."/>
            <person name="Nakano N."/>
            <person name="Nakauchi H."/>
            <person name="Ng P."/>
            <person name="Nilsson R."/>
            <person name="Nishiguchi S."/>
            <person name="Nishikawa S."/>
            <person name="Nori F."/>
            <person name="Ohara O."/>
            <person name="Okazaki Y."/>
            <person name="Orlando V."/>
            <person name="Pang K.C."/>
            <person name="Pavan W.J."/>
            <person name="Pavesi G."/>
            <person name="Pesole G."/>
            <person name="Petrovsky N."/>
            <person name="Piazza S."/>
            <person name="Reed J."/>
            <person name="Reid J.F."/>
            <person name="Ring B.Z."/>
            <person name="Ringwald M."/>
            <person name="Rost B."/>
            <person name="Ruan Y."/>
            <person name="Salzberg S.L."/>
            <person name="Sandelin A."/>
            <person name="Schneider C."/>
            <person name="Schoenbach C."/>
            <person name="Sekiguchi K."/>
            <person name="Semple C.A."/>
            <person name="Seno S."/>
            <person name="Sessa L."/>
            <person name="Sheng Y."/>
            <person name="Shibata Y."/>
            <person name="Shimada H."/>
            <person name="Shimada K."/>
            <person name="Silva D."/>
            <person name="Sinclair B."/>
            <person name="Sperling S."/>
            <person name="Stupka E."/>
            <person name="Sugiura K."/>
            <person name="Sultana R."/>
            <person name="Takenaka Y."/>
            <person name="Taki K."/>
            <person name="Tammoja K."/>
            <person name="Tan S.L."/>
            <person name="Tang S."/>
            <person name="Taylor M.S."/>
            <person name="Tegner J."/>
            <person name="Teichmann S.A."/>
            <person name="Ueda H.R."/>
            <person name="van Nimwegen E."/>
            <person name="Verardo R."/>
            <person name="Wei C.L."/>
            <person name="Yagi K."/>
            <person name="Yamanishi H."/>
            <person name="Zabarovsky E."/>
            <person name="Zhu S."/>
            <person name="Zimmer A."/>
            <person name="Hide W."/>
            <person name="Bult C."/>
            <person name="Grimmond S.M."/>
            <person name="Teasdale R.D."/>
            <person name="Liu E.T."/>
            <person name="Brusic V."/>
            <person name="Quackenbush J."/>
            <person name="Wahlestedt C."/>
            <person name="Mattick J.S."/>
            <person name="Hume D.A."/>
            <person name="Kai C."/>
            <person name="Sasaki D."/>
            <person name="Tomaru Y."/>
            <person name="Fukuda S."/>
            <person name="Kanamori-Katayama M."/>
            <person name="Suzuki M."/>
            <person name="Aoki J."/>
            <person name="Arakawa T."/>
            <person name="Iida J."/>
            <person name="Imamura K."/>
            <person name="Itoh M."/>
            <person name="Kato T."/>
            <person name="Kawaji H."/>
            <person name="Kawagashira N."/>
            <person name="Kawashima T."/>
            <person name="Kojima M."/>
            <person name="Kondo S."/>
            <person name="Konno H."/>
            <person name="Nakano K."/>
            <person name="Ninomiya N."/>
            <person name="Nishio T."/>
            <person name="Okada M."/>
            <person name="Plessy C."/>
            <person name="Shibata K."/>
            <person name="Shiraki T."/>
            <person name="Suzuki S."/>
            <person name="Tagami M."/>
            <person name="Waki K."/>
            <person name="Watahiki A."/>
            <person name="Okamura-Oho Y."/>
            <person name="Suzuki H."/>
            <person name="Kawai J."/>
            <person name="Hayashizaki Y."/>
        </authorList>
    </citation>
    <scope>NUCLEOTIDE SEQUENCE [LARGE SCALE MRNA]</scope>
    <source>
        <strain>C57BL/6J</strain>
        <tissue>Embryo</tissue>
    </source>
</reference>
<reference key="3">
    <citation type="journal article" date="2004" name="Genome Res.">
        <title>The status, quality, and expansion of the NIH full-length cDNA project: the Mammalian Gene Collection (MGC).</title>
        <authorList>
            <consortium name="The MGC Project Team"/>
        </authorList>
    </citation>
    <scope>NUCLEOTIDE SEQUENCE [LARGE SCALE MRNA]</scope>
    <source>
        <strain>C57BL/6J</strain>
        <tissue>Fetal brain</tissue>
    </source>
</reference>
<reference evidence="6" key="4">
    <citation type="journal article" date="1997" name="J. Biol. Chem.">
        <title>KIS is a protein kinase with an RNA recognition motif.</title>
        <authorList>
            <person name="Maucuer A."/>
            <person name="Ozon S."/>
            <person name="Manceau V."/>
            <person name="Gavet O."/>
            <person name="Lawler S."/>
            <person name="Curmi P."/>
            <person name="Sobel A."/>
        </authorList>
    </citation>
    <scope>NUCLEOTIDE SEQUENCE [MRNA] OF 1-414</scope>
    <source>
        <tissue>Brain</tissue>
    </source>
</reference>
<reference evidence="6" key="5">
    <citation type="submission" date="2002-07" db="EMBL/GenBank/DDBJ databases">
        <authorList>
            <person name="Maucuer A."/>
        </authorList>
    </citation>
    <scope>SEQUENCE REVISION TO 52 AND 68-69</scope>
</reference>
<reference evidence="6" key="6">
    <citation type="journal article" date="1995" name="Proc. Natl. Acad. Sci. U.S.A.">
        <title>Stathmin interaction with a putative kinase and coiled-coil-forming protein domains.</title>
        <authorList>
            <person name="Maucuer A."/>
            <person name="Camonis J.H."/>
            <person name="Sobel A."/>
        </authorList>
    </citation>
    <scope>NUCLEOTIDE SEQUENCE [MRNA] OF 122-321</scope>
    <scope>INTERACTION WITH STATHMIN</scope>
    <source>
        <tissue>Embryo</tissue>
    </source>
</reference>
<reference key="7">
    <citation type="journal article" date="2002" name="EMBO J.">
        <title>A growth factor-dependent nuclear kinase phosphorylates p27(Kip1) and regulates cell cycle progression.</title>
        <authorList>
            <person name="Boehm M."/>
            <person name="Yoshimoto T."/>
            <person name="Crook M.F."/>
            <person name="Nallamshetty S."/>
            <person name="True A."/>
            <person name="Nabel G.J."/>
            <person name="Nabel E.G."/>
        </authorList>
    </citation>
    <scope>INTERACTION WITH CDKN1B</scope>
    <scope>SUBCELLULAR LOCATION</scope>
</reference>
<feature type="chain" id="PRO_0000086778" description="Serine/threonine-protein kinase Kist">
    <location>
        <begin position="1"/>
        <end position="419"/>
    </location>
</feature>
<feature type="domain" description="Protein kinase" evidence="2">
    <location>
        <begin position="23"/>
        <end position="303"/>
    </location>
</feature>
<feature type="domain" description="RRM" evidence="3">
    <location>
        <begin position="323"/>
        <end position="405"/>
    </location>
</feature>
<feature type="active site" description="Proton acceptor" evidence="2">
    <location>
        <position position="158"/>
    </location>
</feature>
<feature type="binding site" evidence="2">
    <location>
        <begin position="29"/>
        <end position="37"/>
    </location>
    <ligand>
        <name>ATP</name>
        <dbReference type="ChEBI" id="CHEBI:30616"/>
    </ligand>
</feature>
<feature type="binding site" evidence="2">
    <location>
        <position position="54"/>
    </location>
    <ligand>
        <name>ATP</name>
        <dbReference type="ChEBI" id="CHEBI:30616"/>
    </ligand>
</feature>
<feature type="sequence conflict" description="In Ref. 6; CAA57763." evidence="6" ref="6">
    <original>N</original>
    <variation>D</variation>
    <location>
        <position position="170"/>
    </location>
</feature>
<feature type="sequence conflict" description="In Ref. 2 and 4." evidence="6" ref="2 4">
    <original>I</original>
    <variation>T</variation>
    <location>
        <position position="231"/>
    </location>
</feature>